<comment type="function">
    <text evidence="1">Cyclin partner of the cyclin-dependent kinase (CDK) pef1 (PHO85 homolog).</text>
</comment>
<comment type="subunit">
    <text evidence="1">Forms a cyclin-CDK complex with pef1.</text>
</comment>
<comment type="subcellular location">
    <subcellularLocation>
        <location evidence="3">Cytoplasm</location>
    </subcellularLocation>
    <subcellularLocation>
        <location evidence="3">Nucleus</location>
    </subcellularLocation>
    <text>Localizes at the barrier septum.</text>
</comment>
<comment type="similarity">
    <text evidence="4">Belongs to the cyclin family. PHO80 subfamily.</text>
</comment>
<proteinExistence type="inferred from homology"/>
<sequence length="243" mass="27937">MSLAFTLLTSKDNTDEDEEHLELSSFNQEKLLEMISVFLSRLTRLNDSKQEATESDQIPLSPTSLKNPCLIFSAKNVPSISIQAYLTRILKYCPATNDVFLSVLIYLDRIVHHFHFTVFINSFNIHRFLIAGFTAASKFFSDVFYTNSRYAKVGGIPLHELNHLELSFFVFNDFNLFISLEDLQAYGDLLLSWYRQNGQNYNPTDVSCSIESPISHTPQQNQQDEQPRRPIMDRRLLSSHSIG</sequence>
<dbReference type="EMBL" id="CU329671">
    <property type="protein sequence ID" value="CAA16850.1"/>
    <property type="molecule type" value="Genomic_DNA"/>
</dbReference>
<dbReference type="PIR" id="T39881">
    <property type="entry name" value="T39881"/>
</dbReference>
<dbReference type="RefSeq" id="NP_596374.1">
    <property type="nucleotide sequence ID" value="NM_001022295.2"/>
</dbReference>
<dbReference type="SMR" id="O42979"/>
<dbReference type="BioGRID" id="277273">
    <property type="interactions" value="99"/>
</dbReference>
<dbReference type="FunCoup" id="O42979">
    <property type="interactions" value="38"/>
</dbReference>
<dbReference type="STRING" id="284812.O42979"/>
<dbReference type="iPTMnet" id="O42979"/>
<dbReference type="PaxDb" id="4896-SPBC20F10.10.1"/>
<dbReference type="EnsemblFungi" id="SPBC20F10.10.1">
    <property type="protein sequence ID" value="SPBC20F10.10.1:pep"/>
    <property type="gene ID" value="SPBC20F10.10"/>
</dbReference>
<dbReference type="GeneID" id="2540751"/>
<dbReference type="KEGG" id="spo:2540751"/>
<dbReference type="PomBase" id="SPBC20F10.10">
    <property type="gene designation" value="psl1"/>
</dbReference>
<dbReference type="VEuPathDB" id="FungiDB:SPBC20F10.10"/>
<dbReference type="eggNOG" id="KOG1674">
    <property type="taxonomic scope" value="Eukaryota"/>
</dbReference>
<dbReference type="HOGENOM" id="CLU_947164_0_0_1"/>
<dbReference type="InParanoid" id="O42979"/>
<dbReference type="OMA" id="YSTCFHA"/>
<dbReference type="PhylomeDB" id="O42979"/>
<dbReference type="PRO" id="PR:O42979"/>
<dbReference type="Proteomes" id="UP000002485">
    <property type="component" value="Chromosome II"/>
</dbReference>
<dbReference type="GO" id="GO:0032153">
    <property type="term" value="C:cell division site"/>
    <property type="evidence" value="ECO:0007005"/>
    <property type="project" value="PomBase"/>
</dbReference>
<dbReference type="GO" id="GO:0000307">
    <property type="term" value="C:cyclin-dependent protein kinase holoenzyme complex"/>
    <property type="evidence" value="ECO:0000318"/>
    <property type="project" value="GO_Central"/>
</dbReference>
<dbReference type="GO" id="GO:0005829">
    <property type="term" value="C:cytosol"/>
    <property type="evidence" value="ECO:0007005"/>
    <property type="project" value="PomBase"/>
</dbReference>
<dbReference type="GO" id="GO:0044732">
    <property type="term" value="C:mitotic spindle pole body"/>
    <property type="evidence" value="ECO:0007005"/>
    <property type="project" value="PomBase"/>
</dbReference>
<dbReference type="GO" id="GO:0005634">
    <property type="term" value="C:nucleus"/>
    <property type="evidence" value="ECO:0007005"/>
    <property type="project" value="PomBase"/>
</dbReference>
<dbReference type="GO" id="GO:0016538">
    <property type="term" value="F:cyclin-dependent protein serine/threonine kinase regulator activity"/>
    <property type="evidence" value="ECO:0000318"/>
    <property type="project" value="GO_Central"/>
</dbReference>
<dbReference type="GO" id="GO:0019901">
    <property type="term" value="F:protein kinase binding"/>
    <property type="evidence" value="ECO:0007669"/>
    <property type="project" value="InterPro"/>
</dbReference>
<dbReference type="GO" id="GO:0045875">
    <property type="term" value="P:negative regulation of sister chromatid cohesion"/>
    <property type="evidence" value="ECO:0000316"/>
    <property type="project" value="PomBase"/>
</dbReference>
<dbReference type="GO" id="GO:1901987">
    <property type="term" value="P:regulation of cell cycle phase transition"/>
    <property type="evidence" value="ECO:0000303"/>
    <property type="project" value="PomBase"/>
</dbReference>
<dbReference type="GO" id="GO:0023052">
    <property type="term" value="P:signaling"/>
    <property type="evidence" value="ECO:0000303"/>
    <property type="project" value="PomBase"/>
</dbReference>
<dbReference type="CDD" id="cd20558">
    <property type="entry name" value="CYCLIN_ScPCL7-like"/>
    <property type="match status" value="1"/>
</dbReference>
<dbReference type="Gene3D" id="1.10.472.10">
    <property type="entry name" value="Cyclin-like"/>
    <property type="match status" value="1"/>
</dbReference>
<dbReference type="InterPro" id="IPR012389">
    <property type="entry name" value="Cyclin_P/U"/>
</dbReference>
<dbReference type="InterPro" id="IPR013922">
    <property type="entry name" value="Cyclin_PHO80-like"/>
</dbReference>
<dbReference type="PANTHER" id="PTHR15615">
    <property type="match status" value="1"/>
</dbReference>
<dbReference type="PANTHER" id="PTHR15615:SF94">
    <property type="entry name" value="PHO85 CYCLIN-6-RELATED"/>
    <property type="match status" value="1"/>
</dbReference>
<dbReference type="Pfam" id="PF08613">
    <property type="entry name" value="Cyclin"/>
    <property type="match status" value="1"/>
</dbReference>
<dbReference type="PIRSF" id="PIRSF027110">
    <property type="entry name" value="PREG"/>
    <property type="match status" value="1"/>
</dbReference>
<gene>
    <name type="primary">psl1</name>
    <name type="ORF">SPBC20F10.10</name>
</gene>
<protein>
    <recommendedName>
        <fullName>PHO85 cyclin-like protein psl1</fullName>
    </recommendedName>
</protein>
<name>PSL1_SCHPO</name>
<keyword id="KW-0195">Cyclin</keyword>
<keyword id="KW-0963">Cytoplasm</keyword>
<keyword id="KW-0539">Nucleus</keyword>
<keyword id="KW-1185">Reference proteome</keyword>
<organism>
    <name type="scientific">Schizosaccharomyces pombe (strain 972 / ATCC 24843)</name>
    <name type="common">Fission yeast</name>
    <dbReference type="NCBI Taxonomy" id="284812"/>
    <lineage>
        <taxon>Eukaryota</taxon>
        <taxon>Fungi</taxon>
        <taxon>Dikarya</taxon>
        <taxon>Ascomycota</taxon>
        <taxon>Taphrinomycotina</taxon>
        <taxon>Schizosaccharomycetes</taxon>
        <taxon>Schizosaccharomycetales</taxon>
        <taxon>Schizosaccharomycetaceae</taxon>
        <taxon>Schizosaccharomyces</taxon>
    </lineage>
</organism>
<feature type="chain" id="PRO_0000374022" description="PHO85 cyclin-like protein psl1">
    <location>
        <begin position="1"/>
        <end position="243"/>
    </location>
</feature>
<feature type="region of interest" description="Disordered" evidence="2">
    <location>
        <begin position="211"/>
        <end position="231"/>
    </location>
</feature>
<feature type="compositionally biased region" description="Polar residues" evidence="2">
    <location>
        <begin position="211"/>
        <end position="224"/>
    </location>
</feature>
<evidence type="ECO:0000250" key="1"/>
<evidence type="ECO:0000256" key="2">
    <source>
        <dbReference type="SAM" id="MobiDB-lite"/>
    </source>
</evidence>
<evidence type="ECO:0000269" key="3">
    <source>
    </source>
</evidence>
<evidence type="ECO:0000305" key="4"/>
<accession>O42979</accession>
<reference key="1">
    <citation type="journal article" date="2002" name="Nature">
        <title>The genome sequence of Schizosaccharomyces pombe.</title>
        <authorList>
            <person name="Wood V."/>
            <person name="Gwilliam R."/>
            <person name="Rajandream M.A."/>
            <person name="Lyne M.H."/>
            <person name="Lyne R."/>
            <person name="Stewart A."/>
            <person name="Sgouros J.G."/>
            <person name="Peat N."/>
            <person name="Hayles J."/>
            <person name="Baker S.G."/>
            <person name="Basham D."/>
            <person name="Bowman S."/>
            <person name="Brooks K."/>
            <person name="Brown D."/>
            <person name="Brown S."/>
            <person name="Chillingworth T."/>
            <person name="Churcher C.M."/>
            <person name="Collins M."/>
            <person name="Connor R."/>
            <person name="Cronin A."/>
            <person name="Davis P."/>
            <person name="Feltwell T."/>
            <person name="Fraser A."/>
            <person name="Gentles S."/>
            <person name="Goble A."/>
            <person name="Hamlin N."/>
            <person name="Harris D.E."/>
            <person name="Hidalgo J."/>
            <person name="Hodgson G."/>
            <person name="Holroyd S."/>
            <person name="Hornsby T."/>
            <person name="Howarth S."/>
            <person name="Huckle E.J."/>
            <person name="Hunt S."/>
            <person name="Jagels K."/>
            <person name="James K.D."/>
            <person name="Jones L."/>
            <person name="Jones M."/>
            <person name="Leather S."/>
            <person name="McDonald S."/>
            <person name="McLean J."/>
            <person name="Mooney P."/>
            <person name="Moule S."/>
            <person name="Mungall K.L."/>
            <person name="Murphy L.D."/>
            <person name="Niblett D."/>
            <person name="Odell C."/>
            <person name="Oliver K."/>
            <person name="O'Neil S."/>
            <person name="Pearson D."/>
            <person name="Quail M.A."/>
            <person name="Rabbinowitsch E."/>
            <person name="Rutherford K.M."/>
            <person name="Rutter S."/>
            <person name="Saunders D."/>
            <person name="Seeger K."/>
            <person name="Sharp S."/>
            <person name="Skelton J."/>
            <person name="Simmonds M.N."/>
            <person name="Squares R."/>
            <person name="Squares S."/>
            <person name="Stevens K."/>
            <person name="Taylor K."/>
            <person name="Taylor R.G."/>
            <person name="Tivey A."/>
            <person name="Walsh S.V."/>
            <person name="Warren T."/>
            <person name="Whitehead S."/>
            <person name="Woodward J.R."/>
            <person name="Volckaert G."/>
            <person name="Aert R."/>
            <person name="Robben J."/>
            <person name="Grymonprez B."/>
            <person name="Weltjens I."/>
            <person name="Vanstreels E."/>
            <person name="Rieger M."/>
            <person name="Schaefer M."/>
            <person name="Mueller-Auer S."/>
            <person name="Gabel C."/>
            <person name="Fuchs M."/>
            <person name="Duesterhoeft A."/>
            <person name="Fritzc C."/>
            <person name="Holzer E."/>
            <person name="Moestl D."/>
            <person name="Hilbert H."/>
            <person name="Borzym K."/>
            <person name="Langer I."/>
            <person name="Beck A."/>
            <person name="Lehrach H."/>
            <person name="Reinhardt R."/>
            <person name="Pohl T.M."/>
            <person name="Eger P."/>
            <person name="Zimmermann W."/>
            <person name="Wedler H."/>
            <person name="Wambutt R."/>
            <person name="Purnelle B."/>
            <person name="Goffeau A."/>
            <person name="Cadieu E."/>
            <person name="Dreano S."/>
            <person name="Gloux S."/>
            <person name="Lelaure V."/>
            <person name="Mottier S."/>
            <person name="Galibert F."/>
            <person name="Aves S.J."/>
            <person name="Xiang Z."/>
            <person name="Hunt C."/>
            <person name="Moore K."/>
            <person name="Hurst S.M."/>
            <person name="Lucas M."/>
            <person name="Rochet M."/>
            <person name="Gaillardin C."/>
            <person name="Tallada V.A."/>
            <person name="Garzon A."/>
            <person name="Thode G."/>
            <person name="Daga R.R."/>
            <person name="Cruzado L."/>
            <person name="Jimenez J."/>
            <person name="Sanchez M."/>
            <person name="del Rey F."/>
            <person name="Benito J."/>
            <person name="Dominguez A."/>
            <person name="Revuelta J.L."/>
            <person name="Moreno S."/>
            <person name="Armstrong J."/>
            <person name="Forsburg S.L."/>
            <person name="Cerutti L."/>
            <person name="Lowe T."/>
            <person name="McCombie W.R."/>
            <person name="Paulsen I."/>
            <person name="Potashkin J."/>
            <person name="Shpakovski G.V."/>
            <person name="Ussery D."/>
            <person name="Barrell B.G."/>
            <person name="Nurse P."/>
        </authorList>
    </citation>
    <scope>NUCLEOTIDE SEQUENCE [LARGE SCALE GENOMIC DNA]</scope>
    <source>
        <strain>972 / ATCC 24843</strain>
    </source>
</reference>
<reference key="2">
    <citation type="journal article" date="2006" name="Nat. Biotechnol.">
        <title>ORFeome cloning and global analysis of protein localization in the fission yeast Schizosaccharomyces pombe.</title>
        <authorList>
            <person name="Matsuyama A."/>
            <person name="Arai R."/>
            <person name="Yashiroda Y."/>
            <person name="Shirai A."/>
            <person name="Kamata A."/>
            <person name="Sekido S."/>
            <person name="Kobayashi Y."/>
            <person name="Hashimoto A."/>
            <person name="Hamamoto M."/>
            <person name="Hiraoka Y."/>
            <person name="Horinouchi S."/>
            <person name="Yoshida M."/>
        </authorList>
    </citation>
    <scope>SUBCELLULAR LOCATION [LARGE SCALE ANALYSIS]</scope>
</reference>